<organism>
    <name type="scientific">Lactobacillus delbrueckii subsp. bulgaricus (strain ATCC BAA-365 / Lb-18)</name>
    <dbReference type="NCBI Taxonomy" id="321956"/>
    <lineage>
        <taxon>Bacteria</taxon>
        <taxon>Bacillati</taxon>
        <taxon>Bacillota</taxon>
        <taxon>Bacilli</taxon>
        <taxon>Lactobacillales</taxon>
        <taxon>Lactobacillaceae</taxon>
        <taxon>Lactobacillus</taxon>
    </lineage>
</organism>
<reference key="1">
    <citation type="journal article" date="2006" name="Proc. Natl. Acad. Sci. U.S.A.">
        <title>Comparative genomics of the lactic acid bacteria.</title>
        <authorList>
            <person name="Makarova K.S."/>
            <person name="Slesarev A."/>
            <person name="Wolf Y.I."/>
            <person name="Sorokin A."/>
            <person name="Mirkin B."/>
            <person name="Koonin E.V."/>
            <person name="Pavlov A."/>
            <person name="Pavlova N."/>
            <person name="Karamychev V."/>
            <person name="Polouchine N."/>
            <person name="Shakhova V."/>
            <person name="Grigoriev I."/>
            <person name="Lou Y."/>
            <person name="Rohksar D."/>
            <person name="Lucas S."/>
            <person name="Huang K."/>
            <person name="Goodstein D.M."/>
            <person name="Hawkins T."/>
            <person name="Plengvidhya V."/>
            <person name="Welker D."/>
            <person name="Hughes J."/>
            <person name="Goh Y."/>
            <person name="Benson A."/>
            <person name="Baldwin K."/>
            <person name="Lee J.-H."/>
            <person name="Diaz-Muniz I."/>
            <person name="Dosti B."/>
            <person name="Smeianov V."/>
            <person name="Wechter W."/>
            <person name="Barabote R."/>
            <person name="Lorca G."/>
            <person name="Altermann E."/>
            <person name="Barrangou R."/>
            <person name="Ganesan B."/>
            <person name="Xie Y."/>
            <person name="Rawsthorne H."/>
            <person name="Tamir D."/>
            <person name="Parker C."/>
            <person name="Breidt F."/>
            <person name="Broadbent J.R."/>
            <person name="Hutkins R."/>
            <person name="O'Sullivan D."/>
            <person name="Steele J."/>
            <person name="Unlu G."/>
            <person name="Saier M.H. Jr."/>
            <person name="Klaenhammer T."/>
            <person name="Richardson P."/>
            <person name="Kozyavkin S."/>
            <person name="Weimer B.C."/>
            <person name="Mills D.A."/>
        </authorList>
    </citation>
    <scope>NUCLEOTIDE SEQUENCE [LARGE SCALE GENOMIC DNA]</scope>
    <source>
        <strain>ATCC BAA-365 / Lb-18</strain>
    </source>
</reference>
<accession>Q04C10</accession>
<gene>
    <name evidence="1" type="primary">rplV</name>
    <name type="ordered locus">LBUL_0355</name>
</gene>
<comment type="function">
    <text evidence="1">This protein binds specifically to 23S rRNA; its binding is stimulated by other ribosomal proteins, e.g. L4, L17, and L20. It is important during the early stages of 50S assembly. It makes multiple contacts with different domains of the 23S rRNA in the assembled 50S subunit and ribosome (By similarity).</text>
</comment>
<comment type="function">
    <text evidence="1">The globular domain of the protein is located near the polypeptide exit tunnel on the outside of the subunit, while an extended beta-hairpin is found that lines the wall of the exit tunnel in the center of the 70S ribosome.</text>
</comment>
<comment type="subunit">
    <text evidence="1">Part of the 50S ribosomal subunit.</text>
</comment>
<comment type="similarity">
    <text evidence="1">Belongs to the universal ribosomal protein uL22 family.</text>
</comment>
<sequence length="117" mass="12743">MAEQISSARAEARTVRIAPRKARLVVDLIRGKSVAEALAILKFTPKAASPIVEKVLRSAVANAEHNYDLESANLYVSEAYVNEGATLKRFRPRAKGSASPIMKRTSHVVVVVSELND</sequence>
<name>RL22_LACDB</name>
<dbReference type="EMBL" id="CP000412">
    <property type="protein sequence ID" value="ABJ58012.1"/>
    <property type="molecule type" value="Genomic_DNA"/>
</dbReference>
<dbReference type="RefSeq" id="WP_002878207.1">
    <property type="nucleotide sequence ID" value="NC_008529.1"/>
</dbReference>
<dbReference type="SMR" id="Q04C10"/>
<dbReference type="GeneID" id="69668431"/>
<dbReference type="KEGG" id="lbu:LBUL_0355"/>
<dbReference type="HOGENOM" id="CLU_083987_3_3_9"/>
<dbReference type="BioCyc" id="LDEL321956:LBUL_RS01660-MONOMER"/>
<dbReference type="GO" id="GO:0022625">
    <property type="term" value="C:cytosolic large ribosomal subunit"/>
    <property type="evidence" value="ECO:0007669"/>
    <property type="project" value="TreeGrafter"/>
</dbReference>
<dbReference type="GO" id="GO:0019843">
    <property type="term" value="F:rRNA binding"/>
    <property type="evidence" value="ECO:0007669"/>
    <property type="project" value="UniProtKB-UniRule"/>
</dbReference>
<dbReference type="GO" id="GO:0003735">
    <property type="term" value="F:structural constituent of ribosome"/>
    <property type="evidence" value="ECO:0007669"/>
    <property type="project" value="InterPro"/>
</dbReference>
<dbReference type="GO" id="GO:0006412">
    <property type="term" value="P:translation"/>
    <property type="evidence" value="ECO:0007669"/>
    <property type="project" value="UniProtKB-UniRule"/>
</dbReference>
<dbReference type="CDD" id="cd00336">
    <property type="entry name" value="Ribosomal_L22"/>
    <property type="match status" value="1"/>
</dbReference>
<dbReference type="FunFam" id="3.90.470.10:FF:000001">
    <property type="entry name" value="50S ribosomal protein L22"/>
    <property type="match status" value="1"/>
</dbReference>
<dbReference type="Gene3D" id="3.90.470.10">
    <property type="entry name" value="Ribosomal protein L22/L17"/>
    <property type="match status" value="1"/>
</dbReference>
<dbReference type="HAMAP" id="MF_01331_B">
    <property type="entry name" value="Ribosomal_uL22_B"/>
    <property type="match status" value="1"/>
</dbReference>
<dbReference type="InterPro" id="IPR001063">
    <property type="entry name" value="Ribosomal_uL22"/>
</dbReference>
<dbReference type="InterPro" id="IPR005727">
    <property type="entry name" value="Ribosomal_uL22_bac/chlpt-type"/>
</dbReference>
<dbReference type="InterPro" id="IPR047867">
    <property type="entry name" value="Ribosomal_uL22_bac/org-type"/>
</dbReference>
<dbReference type="InterPro" id="IPR018260">
    <property type="entry name" value="Ribosomal_uL22_CS"/>
</dbReference>
<dbReference type="InterPro" id="IPR036394">
    <property type="entry name" value="Ribosomal_uL22_sf"/>
</dbReference>
<dbReference type="NCBIfam" id="TIGR01044">
    <property type="entry name" value="rplV_bact"/>
    <property type="match status" value="1"/>
</dbReference>
<dbReference type="PANTHER" id="PTHR13501">
    <property type="entry name" value="CHLOROPLAST 50S RIBOSOMAL PROTEIN L22-RELATED"/>
    <property type="match status" value="1"/>
</dbReference>
<dbReference type="PANTHER" id="PTHR13501:SF8">
    <property type="entry name" value="LARGE RIBOSOMAL SUBUNIT PROTEIN UL22M"/>
    <property type="match status" value="1"/>
</dbReference>
<dbReference type="Pfam" id="PF00237">
    <property type="entry name" value="Ribosomal_L22"/>
    <property type="match status" value="1"/>
</dbReference>
<dbReference type="SUPFAM" id="SSF54843">
    <property type="entry name" value="Ribosomal protein L22"/>
    <property type="match status" value="1"/>
</dbReference>
<dbReference type="PROSITE" id="PS00464">
    <property type="entry name" value="RIBOSOMAL_L22"/>
    <property type="match status" value="1"/>
</dbReference>
<evidence type="ECO:0000255" key="1">
    <source>
        <dbReference type="HAMAP-Rule" id="MF_01331"/>
    </source>
</evidence>
<evidence type="ECO:0000305" key="2"/>
<proteinExistence type="inferred from homology"/>
<protein>
    <recommendedName>
        <fullName evidence="1">Large ribosomal subunit protein uL22</fullName>
    </recommendedName>
    <alternativeName>
        <fullName evidence="2">50S ribosomal protein L22</fullName>
    </alternativeName>
</protein>
<feature type="chain" id="PRO_1000052591" description="Large ribosomal subunit protein uL22">
    <location>
        <begin position="1"/>
        <end position="117"/>
    </location>
</feature>
<keyword id="KW-0687">Ribonucleoprotein</keyword>
<keyword id="KW-0689">Ribosomal protein</keyword>
<keyword id="KW-0694">RNA-binding</keyword>
<keyword id="KW-0699">rRNA-binding</keyword>